<comment type="function">
    <text evidence="1">General (non sugar-specific) component of the phosphoenolpyruvate-dependent sugar phosphotransferase system (sugar PTS). This major carbohydrate active-transport system catalyzes the phosphorylation of incoming sugar substrates concomitantly with their translocation across the cell membrane. Enzyme I transfers the phosphoryl group from phosphoenolpyruvate (PEP) to the phosphoryl carrier protein (HPr).</text>
</comment>
<comment type="catalytic activity">
    <reaction evidence="1">
        <text>L-histidyl-[protein] + phosphoenolpyruvate = N(pros)-phospho-L-histidyl-[protein] + pyruvate</text>
        <dbReference type="Rhea" id="RHEA:23880"/>
        <dbReference type="Rhea" id="RHEA-COMP:9745"/>
        <dbReference type="Rhea" id="RHEA-COMP:9746"/>
        <dbReference type="ChEBI" id="CHEBI:15361"/>
        <dbReference type="ChEBI" id="CHEBI:29979"/>
        <dbReference type="ChEBI" id="CHEBI:58702"/>
        <dbReference type="ChEBI" id="CHEBI:64837"/>
        <dbReference type="EC" id="2.7.3.9"/>
    </reaction>
</comment>
<comment type="cofactor">
    <cofactor evidence="1 6">
        <name>Mg(2+)</name>
        <dbReference type="ChEBI" id="CHEBI:18420"/>
    </cofactor>
</comment>
<comment type="subunit">
    <text evidence="3">Homodimer.</text>
</comment>
<comment type="subcellular location">
    <subcellularLocation>
        <location>Cytoplasm</location>
    </subcellularLocation>
</comment>
<comment type="domain">
    <text evidence="1">The N-terminal domain contains the HPr binding site, the central domain the pyrophosphate/phosphate carrier histidine, and the C-terminal domain the pyruvate binding site.</text>
</comment>
<comment type="miscellaneous">
    <text evidence="1">The reaction takes place in three steps, mediated by a phosphocarrier histidine residue located on the surface of the central domain. The two first partial reactions are catalyzed at an active site located on the N-terminal domain, and the third partial reaction is catalyzed at an active site located on the C-terminal domain. For catalytic turnover, the central domain swivels from the concave surface of the N-terminal domain to that of the C-terminal domain.</text>
</comment>
<comment type="similarity">
    <text evidence="5">Belongs to the PEP-utilizing enzyme family.</text>
</comment>
<evidence type="ECO:0000250" key="1">
    <source>
        <dbReference type="UniProtKB" id="P08839"/>
    </source>
</evidence>
<evidence type="ECO:0000250" key="2">
    <source>
        <dbReference type="UniProtKB" id="P23533"/>
    </source>
</evidence>
<evidence type="ECO:0000269" key="3">
    <source>
    </source>
</evidence>
<evidence type="ECO:0000303" key="4">
    <source>
    </source>
</evidence>
<evidence type="ECO:0000305" key="5"/>
<evidence type="ECO:0000305" key="6">
    <source>
    </source>
</evidence>
<evidence type="ECO:0007829" key="7">
    <source>
        <dbReference type="PDB" id="2WQD"/>
    </source>
</evidence>
<keyword id="KW-0002">3D-structure</keyword>
<keyword id="KW-0963">Cytoplasm</keyword>
<keyword id="KW-0418">Kinase</keyword>
<keyword id="KW-0460">Magnesium</keyword>
<keyword id="KW-0479">Metal-binding</keyword>
<keyword id="KW-0598">Phosphotransferase system</keyword>
<keyword id="KW-0762">Sugar transport</keyword>
<keyword id="KW-0808">Transferase</keyword>
<keyword id="KW-0813">Transport</keyword>
<sequence>MSKLIKGIAASDGVAIAKAYLLVEPDLTFDKNEKVTDVEGEVAKFNSAIEASKVELTKIRNNAEVQLGADKAAIFDAHLLVLDDPELIQPIQDKIKNENANAATALTDVTTQFVTIFESMDNEYMKERAADIRDVSKRVLSHILGVELPNPSMIDESVVIVGNDLTPSDTAQLNKEFVQGFATNIGGRTSHSAIMSRSLEIPAIVGTKSITQEVKQGDMIIVDGLNGDVIVNPTEDELIAYQDKRERYFADKKELQKLRDADTVTVDGVHAELAANIGTPNDLPGVIENGAQGIGLYRTEFLYMGRDQMPTEEEQFEAYKEVLEAMGGKRVVVRTLDIGGDKELSYLNLPEEMNPFLGYRAIRLCLAQQDIFRPQLRALLRASVYGKLNIMFPMVATINEFREAKAILLEEKENLKNEGHDISDDIELGIMVEIPATAALADVFAKEVDFFSIGTNDLIQYTLAADRMSERVSYLYQPYNPSILRLVKQVIEASHKEGKWTGMCGEMAGDETAIPLLLGLGLDEFSMSATSILKARRQINGLSKNEMTELANRAVDCATQEEVIELVNNYVK</sequence>
<proteinExistence type="evidence at protein level"/>
<gene>
    <name type="primary">ptsI</name>
</gene>
<accession>P51183</accession>
<name>PT1_STAAU</name>
<protein>
    <recommendedName>
        <fullName evidence="4">Phosphoenolpyruvate-protein phosphotransferase</fullName>
        <ecNumber evidence="1">2.7.3.9</ecNumber>
    </recommendedName>
    <alternativeName>
        <fullName evidence="4">Phosphotransferase system, enzyme I</fullName>
    </alternativeName>
</protein>
<organism>
    <name type="scientific">Staphylococcus aureus</name>
    <dbReference type="NCBI Taxonomy" id="1280"/>
    <lineage>
        <taxon>Bacteria</taxon>
        <taxon>Bacillati</taxon>
        <taxon>Bacillota</taxon>
        <taxon>Bacilli</taxon>
        <taxon>Bacillales</taxon>
        <taxon>Staphylococcaceae</taxon>
        <taxon>Staphylococcus</taxon>
    </lineage>
</organism>
<dbReference type="EC" id="2.7.3.9" evidence="1"/>
<dbReference type="EMBL" id="X93205">
    <property type="protein sequence ID" value="CAA63689.1"/>
    <property type="molecule type" value="Genomic_DNA"/>
</dbReference>
<dbReference type="PDB" id="2WQD">
    <property type="method" value="X-ray"/>
    <property type="resolution" value="2.40 A"/>
    <property type="chains" value="A=1-572"/>
</dbReference>
<dbReference type="PDBsum" id="2WQD"/>
<dbReference type="SMR" id="P51183"/>
<dbReference type="OMA" id="RMFANDH"/>
<dbReference type="BRENDA" id="2.7.3.9">
    <property type="organism ID" value="3352"/>
</dbReference>
<dbReference type="EvolutionaryTrace" id="P51183"/>
<dbReference type="GO" id="GO:0005737">
    <property type="term" value="C:cytoplasm"/>
    <property type="evidence" value="ECO:0007669"/>
    <property type="project" value="UniProtKB-SubCell"/>
</dbReference>
<dbReference type="GO" id="GO:0016301">
    <property type="term" value="F:kinase activity"/>
    <property type="evidence" value="ECO:0007669"/>
    <property type="project" value="UniProtKB-KW"/>
</dbReference>
<dbReference type="GO" id="GO:0046872">
    <property type="term" value="F:metal ion binding"/>
    <property type="evidence" value="ECO:0007669"/>
    <property type="project" value="UniProtKB-KW"/>
</dbReference>
<dbReference type="GO" id="GO:0008965">
    <property type="term" value="F:phosphoenolpyruvate-protein phosphotransferase activity"/>
    <property type="evidence" value="ECO:0007669"/>
    <property type="project" value="UniProtKB-EC"/>
</dbReference>
<dbReference type="GO" id="GO:0009401">
    <property type="term" value="P:phosphoenolpyruvate-dependent sugar phosphotransferase system"/>
    <property type="evidence" value="ECO:0007669"/>
    <property type="project" value="UniProtKB-KW"/>
</dbReference>
<dbReference type="FunFam" id="1.10.274.10:FF:000001">
    <property type="entry name" value="Phosphoenolpyruvate-protein phosphotransferase"/>
    <property type="match status" value="1"/>
</dbReference>
<dbReference type="FunFam" id="3.20.20.60:FF:000007">
    <property type="entry name" value="Phosphoenolpyruvate-protein phosphotransferase"/>
    <property type="match status" value="1"/>
</dbReference>
<dbReference type="Gene3D" id="3.20.20.60">
    <property type="entry name" value="Phosphoenolpyruvate-binding domains"/>
    <property type="match status" value="1"/>
</dbReference>
<dbReference type="Gene3D" id="3.50.30.10">
    <property type="entry name" value="Phosphohistidine domain"/>
    <property type="match status" value="1"/>
</dbReference>
<dbReference type="Gene3D" id="1.10.274.10">
    <property type="entry name" value="PtsI, HPr-binding domain"/>
    <property type="match status" value="1"/>
</dbReference>
<dbReference type="InterPro" id="IPR008279">
    <property type="entry name" value="PEP-util_enz_mobile_dom"/>
</dbReference>
<dbReference type="InterPro" id="IPR050499">
    <property type="entry name" value="PEP-utilizing_PTS_enzyme"/>
</dbReference>
<dbReference type="InterPro" id="IPR018274">
    <property type="entry name" value="PEP_util_AS"/>
</dbReference>
<dbReference type="InterPro" id="IPR000121">
    <property type="entry name" value="PEP_util_C"/>
</dbReference>
<dbReference type="InterPro" id="IPR023151">
    <property type="entry name" value="PEP_util_CS"/>
</dbReference>
<dbReference type="InterPro" id="IPR036637">
    <property type="entry name" value="Phosphohistidine_dom_sf"/>
</dbReference>
<dbReference type="InterPro" id="IPR024692">
    <property type="entry name" value="PTS_EI"/>
</dbReference>
<dbReference type="InterPro" id="IPR006318">
    <property type="entry name" value="PTS_EI-like"/>
</dbReference>
<dbReference type="InterPro" id="IPR008731">
    <property type="entry name" value="PTS_EIN"/>
</dbReference>
<dbReference type="InterPro" id="IPR036618">
    <property type="entry name" value="PtsI_HPr-bd_sf"/>
</dbReference>
<dbReference type="InterPro" id="IPR015813">
    <property type="entry name" value="Pyrv/PenolPyrv_kinase-like_dom"/>
</dbReference>
<dbReference type="InterPro" id="IPR040442">
    <property type="entry name" value="Pyrv_kinase-like_dom_sf"/>
</dbReference>
<dbReference type="NCBIfam" id="TIGR01417">
    <property type="entry name" value="PTS_I_fam"/>
    <property type="match status" value="1"/>
</dbReference>
<dbReference type="PANTHER" id="PTHR46244">
    <property type="entry name" value="PHOSPHOENOLPYRUVATE-PROTEIN PHOSPHOTRANSFERASE"/>
    <property type="match status" value="1"/>
</dbReference>
<dbReference type="PANTHER" id="PTHR46244:SF3">
    <property type="entry name" value="PHOSPHOENOLPYRUVATE-PROTEIN PHOSPHOTRANSFERASE"/>
    <property type="match status" value="1"/>
</dbReference>
<dbReference type="Pfam" id="PF05524">
    <property type="entry name" value="PEP-utilisers_N"/>
    <property type="match status" value="1"/>
</dbReference>
<dbReference type="Pfam" id="PF00391">
    <property type="entry name" value="PEP-utilizers"/>
    <property type="match status" value="1"/>
</dbReference>
<dbReference type="Pfam" id="PF02896">
    <property type="entry name" value="PEP-utilizers_C"/>
    <property type="match status" value="1"/>
</dbReference>
<dbReference type="PIRSF" id="PIRSF000732">
    <property type="entry name" value="PTS_enzyme_I"/>
    <property type="match status" value="1"/>
</dbReference>
<dbReference type="PRINTS" id="PR01736">
    <property type="entry name" value="PHPHTRNFRASE"/>
</dbReference>
<dbReference type="SUPFAM" id="SSF47831">
    <property type="entry name" value="Enzyme I of the PEP:sugar phosphotransferase system HPr-binding (sub)domain"/>
    <property type="match status" value="1"/>
</dbReference>
<dbReference type="SUPFAM" id="SSF51621">
    <property type="entry name" value="Phosphoenolpyruvate/pyruvate domain"/>
    <property type="match status" value="1"/>
</dbReference>
<dbReference type="SUPFAM" id="SSF52009">
    <property type="entry name" value="Phosphohistidine domain"/>
    <property type="match status" value="1"/>
</dbReference>
<dbReference type="PROSITE" id="PS00742">
    <property type="entry name" value="PEP_ENZYMES_2"/>
    <property type="match status" value="1"/>
</dbReference>
<dbReference type="PROSITE" id="PS00370">
    <property type="entry name" value="PEP_ENZYMES_PHOS_SITE"/>
    <property type="match status" value="1"/>
</dbReference>
<reference key="1">
    <citation type="submission" date="1995-11" db="EMBL/GenBank/DDBJ databases">
        <authorList>
            <person name="Kravanja M."/>
            <person name="Engelmann R."/>
            <person name="Christiansen I."/>
            <person name="Hengstenberg W."/>
        </authorList>
    </citation>
    <scope>NUCLEOTIDE SEQUENCE [GENOMIC DNA]</scope>
    <source>
        <strain>305A</strain>
    </source>
</reference>
<reference key="2">
    <citation type="journal article" date="2009" name="J. Biol. Chem.">
        <title>Crystal structure of enzyme I of the phosphoenolpyruvate sugar phosphotransferase system in the dephosphorylated state.</title>
        <authorList>
            <person name="Oberholzer A.E."/>
            <person name="Schneider P."/>
            <person name="Siebold C."/>
            <person name="Baumann U."/>
            <person name="Erni B."/>
        </authorList>
    </citation>
    <scope>X-RAY CRYSTALLOGRAPHY (2.40 ANGSTROMS)</scope>
    <scope>COFACTOR</scope>
    <scope>ACTIVE SITE</scope>
    <scope>SUBUNIT</scope>
</reference>
<feature type="chain" id="PRO_0000147085" description="Phosphoenolpyruvate-protein phosphotransferase">
    <location>
        <begin position="1"/>
        <end position="572"/>
    </location>
</feature>
<feature type="active site" description="Tele-phosphohistidine intermediate" evidence="1 6">
    <location>
        <position position="191"/>
    </location>
</feature>
<feature type="active site" description="Proton donor" evidence="1">
    <location>
        <position position="504"/>
    </location>
</feature>
<feature type="binding site" evidence="2">
    <location>
        <position position="298"/>
    </location>
    <ligand>
        <name>phosphoenolpyruvate</name>
        <dbReference type="ChEBI" id="CHEBI:58702"/>
    </ligand>
</feature>
<feature type="binding site" evidence="1">
    <location>
        <position position="334"/>
    </location>
    <ligand>
        <name>phosphoenolpyruvate</name>
        <dbReference type="ChEBI" id="CHEBI:58702"/>
    </ligand>
</feature>
<feature type="binding site" evidence="1">
    <location>
        <position position="433"/>
    </location>
    <ligand>
        <name>Mg(2+)</name>
        <dbReference type="ChEBI" id="CHEBI:18420"/>
    </ligand>
</feature>
<feature type="binding site" evidence="1">
    <location>
        <begin position="456"/>
        <end position="457"/>
    </location>
    <ligand>
        <name>phosphoenolpyruvate</name>
        <dbReference type="ChEBI" id="CHEBI:58702"/>
    </ligand>
</feature>
<feature type="binding site" evidence="1">
    <location>
        <position position="457"/>
    </location>
    <ligand>
        <name>Mg(2+)</name>
        <dbReference type="ChEBI" id="CHEBI:18420"/>
    </ligand>
</feature>
<feature type="binding site" evidence="2">
    <location>
        <position position="467"/>
    </location>
    <ligand>
        <name>phosphoenolpyruvate</name>
        <dbReference type="ChEBI" id="CHEBI:58702"/>
    </ligand>
</feature>
<feature type="strand" evidence="7">
    <location>
        <begin position="3"/>
        <end position="6"/>
    </location>
</feature>
<feature type="strand" evidence="7">
    <location>
        <begin position="8"/>
        <end position="11"/>
    </location>
</feature>
<feature type="strand" evidence="7">
    <location>
        <begin position="13"/>
        <end position="21"/>
    </location>
</feature>
<feature type="helix" evidence="7">
    <location>
        <begin position="38"/>
        <end position="61"/>
    </location>
</feature>
<feature type="turn" evidence="7">
    <location>
        <begin position="62"/>
        <end position="66"/>
    </location>
</feature>
<feature type="helix" evidence="7">
    <location>
        <begin position="73"/>
        <end position="81"/>
    </location>
</feature>
<feature type="helix" evidence="7">
    <location>
        <begin position="85"/>
        <end position="98"/>
    </location>
</feature>
<feature type="helix" evidence="7">
    <location>
        <begin position="102"/>
        <end position="118"/>
    </location>
</feature>
<feature type="strand" evidence="7">
    <location>
        <begin position="119"/>
        <end position="121"/>
    </location>
</feature>
<feature type="helix" evidence="7">
    <location>
        <begin position="123"/>
        <end position="143"/>
    </location>
</feature>
<feature type="strand" evidence="7">
    <location>
        <begin position="158"/>
        <end position="163"/>
    </location>
</feature>
<feature type="helix" evidence="7">
    <location>
        <begin position="167"/>
        <end position="170"/>
    </location>
</feature>
<feature type="turn" evidence="7">
    <location>
        <begin position="175"/>
        <end position="177"/>
    </location>
</feature>
<feature type="strand" evidence="7">
    <location>
        <begin position="178"/>
        <end position="185"/>
    </location>
</feature>
<feature type="helix" evidence="7">
    <location>
        <begin position="191"/>
        <end position="198"/>
    </location>
</feature>
<feature type="strand" evidence="7">
    <location>
        <begin position="203"/>
        <end position="205"/>
    </location>
</feature>
<feature type="helix" evidence="7">
    <location>
        <begin position="210"/>
        <end position="213"/>
    </location>
</feature>
<feature type="strand" evidence="7">
    <location>
        <begin position="219"/>
        <end position="223"/>
    </location>
</feature>
<feature type="turn" evidence="7">
    <location>
        <begin position="224"/>
        <end position="227"/>
    </location>
</feature>
<feature type="strand" evidence="7">
    <location>
        <begin position="228"/>
        <end position="232"/>
    </location>
</feature>
<feature type="helix" evidence="7">
    <location>
        <begin position="235"/>
        <end position="256"/>
    </location>
</feature>
<feature type="turn" evidence="7">
    <location>
        <begin position="257"/>
        <end position="260"/>
    </location>
</feature>
<feature type="strand" evidence="7">
    <location>
        <begin position="272"/>
        <end position="279"/>
    </location>
</feature>
<feature type="helix" evidence="7">
    <location>
        <begin position="280"/>
        <end position="282"/>
    </location>
</feature>
<feature type="helix" evidence="7">
    <location>
        <begin position="283"/>
        <end position="288"/>
    </location>
</feature>
<feature type="strand" evidence="7">
    <location>
        <begin position="294"/>
        <end position="298"/>
    </location>
</feature>
<feature type="helix" evidence="7">
    <location>
        <begin position="300"/>
        <end position="303"/>
    </location>
</feature>
<feature type="strand" evidence="7">
    <location>
        <begin position="304"/>
        <end position="308"/>
    </location>
</feature>
<feature type="helix" evidence="7">
    <location>
        <begin position="312"/>
        <end position="325"/>
    </location>
</feature>
<feature type="turn" evidence="7">
    <location>
        <begin position="326"/>
        <end position="328"/>
    </location>
</feature>
<feature type="strand" evidence="7">
    <location>
        <begin position="331"/>
        <end position="334"/>
    </location>
</feature>
<feature type="helix" evidence="7">
    <location>
        <begin position="355"/>
        <end position="357"/>
    </location>
</feature>
<feature type="helix" evidence="7">
    <location>
        <begin position="361"/>
        <end position="365"/>
    </location>
</feature>
<feature type="helix" evidence="7">
    <location>
        <begin position="369"/>
        <end position="382"/>
    </location>
</feature>
<feature type="turn" evidence="7">
    <location>
        <begin position="383"/>
        <end position="385"/>
    </location>
</feature>
<feature type="strand" evidence="7">
    <location>
        <begin position="388"/>
        <end position="393"/>
    </location>
</feature>
<feature type="helix" evidence="7">
    <location>
        <begin position="398"/>
        <end position="418"/>
    </location>
</feature>
<feature type="strand" evidence="7">
    <location>
        <begin position="427"/>
        <end position="432"/>
    </location>
</feature>
<feature type="helix" evidence="7">
    <location>
        <begin position="435"/>
        <end position="439"/>
    </location>
</feature>
<feature type="helix" evidence="7">
    <location>
        <begin position="441"/>
        <end position="447"/>
    </location>
</feature>
<feature type="strand" evidence="7">
    <location>
        <begin position="449"/>
        <end position="453"/>
    </location>
</feature>
<feature type="helix" evidence="7">
    <location>
        <begin position="455"/>
        <end position="463"/>
    </location>
</feature>
<feature type="strand" evidence="7">
    <location>
        <begin position="467"/>
        <end position="469"/>
    </location>
</feature>
<feature type="helix" evidence="7">
    <location>
        <begin position="470"/>
        <end position="475"/>
    </location>
</feature>
<feature type="helix" evidence="7">
    <location>
        <begin position="481"/>
        <end position="496"/>
    </location>
</feature>
<feature type="strand" evidence="7">
    <location>
        <begin position="500"/>
        <end position="503"/>
    </location>
</feature>
<feature type="helix" evidence="7">
    <location>
        <begin position="506"/>
        <end position="509"/>
    </location>
</feature>
<feature type="turn" evidence="7">
    <location>
        <begin position="511"/>
        <end position="513"/>
    </location>
</feature>
<feature type="helix" evidence="7">
    <location>
        <begin position="514"/>
        <end position="520"/>
    </location>
</feature>
<feature type="strand" evidence="7">
    <location>
        <begin position="524"/>
        <end position="527"/>
    </location>
</feature>
<feature type="helix" evidence="7">
    <location>
        <begin position="529"/>
        <end position="531"/>
    </location>
</feature>
<feature type="helix" evidence="7">
    <location>
        <begin position="532"/>
        <end position="540"/>
    </location>
</feature>
<feature type="helix" evidence="7">
    <location>
        <begin position="544"/>
        <end position="554"/>
    </location>
</feature>
<feature type="helix" evidence="7">
    <location>
        <begin position="560"/>
        <end position="568"/>
    </location>
</feature>